<dbReference type="EC" id="2.1.3.2" evidence="1"/>
<dbReference type="EMBL" id="CP000270">
    <property type="protein sequence ID" value="ABE29190.1"/>
    <property type="molecule type" value="Genomic_DNA"/>
</dbReference>
<dbReference type="RefSeq" id="WP_007178987.1">
    <property type="nucleotide sequence ID" value="NC_007951.1"/>
</dbReference>
<dbReference type="SMR" id="Q144P9"/>
<dbReference type="STRING" id="266265.Bxe_A3808"/>
<dbReference type="KEGG" id="bxb:DR64_1485"/>
<dbReference type="KEGG" id="bxe:Bxe_A3808"/>
<dbReference type="eggNOG" id="COG0540">
    <property type="taxonomic scope" value="Bacteria"/>
</dbReference>
<dbReference type="OrthoDB" id="9774690at2"/>
<dbReference type="UniPathway" id="UPA00070">
    <property type="reaction ID" value="UER00116"/>
</dbReference>
<dbReference type="Proteomes" id="UP000001817">
    <property type="component" value="Chromosome 1"/>
</dbReference>
<dbReference type="GO" id="GO:0005829">
    <property type="term" value="C:cytosol"/>
    <property type="evidence" value="ECO:0007669"/>
    <property type="project" value="TreeGrafter"/>
</dbReference>
<dbReference type="GO" id="GO:0016597">
    <property type="term" value="F:amino acid binding"/>
    <property type="evidence" value="ECO:0007669"/>
    <property type="project" value="InterPro"/>
</dbReference>
<dbReference type="GO" id="GO:0004070">
    <property type="term" value="F:aspartate carbamoyltransferase activity"/>
    <property type="evidence" value="ECO:0007669"/>
    <property type="project" value="UniProtKB-UniRule"/>
</dbReference>
<dbReference type="GO" id="GO:0006207">
    <property type="term" value="P:'de novo' pyrimidine nucleobase biosynthetic process"/>
    <property type="evidence" value="ECO:0007669"/>
    <property type="project" value="InterPro"/>
</dbReference>
<dbReference type="GO" id="GO:0044205">
    <property type="term" value="P:'de novo' UMP biosynthetic process"/>
    <property type="evidence" value="ECO:0007669"/>
    <property type="project" value="UniProtKB-UniRule"/>
</dbReference>
<dbReference type="GO" id="GO:0006520">
    <property type="term" value="P:amino acid metabolic process"/>
    <property type="evidence" value="ECO:0007669"/>
    <property type="project" value="InterPro"/>
</dbReference>
<dbReference type="FunFam" id="3.40.50.1370:FF:000007">
    <property type="entry name" value="Aspartate carbamoyltransferase"/>
    <property type="match status" value="1"/>
</dbReference>
<dbReference type="Gene3D" id="3.40.50.1370">
    <property type="entry name" value="Aspartate/ornithine carbamoyltransferase"/>
    <property type="match status" value="2"/>
</dbReference>
<dbReference type="HAMAP" id="MF_00001">
    <property type="entry name" value="Asp_carb_tr"/>
    <property type="match status" value="1"/>
</dbReference>
<dbReference type="InterPro" id="IPR006132">
    <property type="entry name" value="Asp/Orn_carbamoyltranf_P-bd"/>
</dbReference>
<dbReference type="InterPro" id="IPR006130">
    <property type="entry name" value="Asp/Orn_carbamoylTrfase"/>
</dbReference>
<dbReference type="InterPro" id="IPR036901">
    <property type="entry name" value="Asp/Orn_carbamoylTrfase_sf"/>
</dbReference>
<dbReference type="InterPro" id="IPR002082">
    <property type="entry name" value="Asp_carbamoyltransf"/>
</dbReference>
<dbReference type="InterPro" id="IPR006131">
    <property type="entry name" value="Asp_carbamoyltransf_Asp/Orn-bd"/>
</dbReference>
<dbReference type="NCBIfam" id="TIGR00670">
    <property type="entry name" value="asp_carb_tr"/>
    <property type="match status" value="1"/>
</dbReference>
<dbReference type="NCBIfam" id="NF002032">
    <property type="entry name" value="PRK00856.1"/>
    <property type="match status" value="1"/>
</dbReference>
<dbReference type="PANTHER" id="PTHR45753:SF6">
    <property type="entry name" value="ASPARTATE CARBAMOYLTRANSFERASE"/>
    <property type="match status" value="1"/>
</dbReference>
<dbReference type="PANTHER" id="PTHR45753">
    <property type="entry name" value="ORNITHINE CARBAMOYLTRANSFERASE, MITOCHONDRIAL"/>
    <property type="match status" value="1"/>
</dbReference>
<dbReference type="Pfam" id="PF00185">
    <property type="entry name" value="OTCace"/>
    <property type="match status" value="1"/>
</dbReference>
<dbReference type="Pfam" id="PF02729">
    <property type="entry name" value="OTCace_N"/>
    <property type="match status" value="1"/>
</dbReference>
<dbReference type="PRINTS" id="PR00100">
    <property type="entry name" value="AOTCASE"/>
</dbReference>
<dbReference type="PRINTS" id="PR00101">
    <property type="entry name" value="ATCASE"/>
</dbReference>
<dbReference type="SUPFAM" id="SSF53671">
    <property type="entry name" value="Aspartate/ornithine carbamoyltransferase"/>
    <property type="match status" value="1"/>
</dbReference>
<dbReference type="PROSITE" id="PS00097">
    <property type="entry name" value="CARBAMOYLTRANSFERASE"/>
    <property type="match status" value="1"/>
</dbReference>
<comment type="function">
    <text evidence="1">Catalyzes the condensation of carbamoyl phosphate and aspartate to form carbamoyl aspartate and inorganic phosphate, the committed step in the de novo pyrimidine nucleotide biosynthesis pathway.</text>
</comment>
<comment type="catalytic activity">
    <reaction evidence="1">
        <text>carbamoyl phosphate + L-aspartate = N-carbamoyl-L-aspartate + phosphate + H(+)</text>
        <dbReference type="Rhea" id="RHEA:20013"/>
        <dbReference type="ChEBI" id="CHEBI:15378"/>
        <dbReference type="ChEBI" id="CHEBI:29991"/>
        <dbReference type="ChEBI" id="CHEBI:32814"/>
        <dbReference type="ChEBI" id="CHEBI:43474"/>
        <dbReference type="ChEBI" id="CHEBI:58228"/>
        <dbReference type="EC" id="2.1.3.2"/>
    </reaction>
</comment>
<comment type="pathway">
    <text evidence="1">Pyrimidine metabolism; UMP biosynthesis via de novo pathway; (S)-dihydroorotate from bicarbonate: step 2/3.</text>
</comment>
<comment type="subunit">
    <text evidence="1">Heterododecamer (2C3:3R2) of six catalytic PyrB chains organized as two trimers (C3), and six regulatory PyrI chains organized as three dimers (R2).</text>
</comment>
<comment type="similarity">
    <text evidence="1">Belongs to the aspartate/ornithine carbamoyltransferase superfamily. ATCase family.</text>
</comment>
<feature type="chain" id="PRO_0000321082" description="Aspartate carbamoyltransferase catalytic subunit">
    <location>
        <begin position="1"/>
        <end position="341"/>
    </location>
</feature>
<feature type="binding site" evidence="1">
    <location>
        <position position="89"/>
    </location>
    <ligand>
        <name>carbamoyl phosphate</name>
        <dbReference type="ChEBI" id="CHEBI:58228"/>
    </ligand>
</feature>
<feature type="binding site" evidence="1">
    <location>
        <position position="90"/>
    </location>
    <ligand>
        <name>carbamoyl phosphate</name>
        <dbReference type="ChEBI" id="CHEBI:58228"/>
    </ligand>
</feature>
<feature type="binding site" evidence="1">
    <location>
        <position position="117"/>
    </location>
    <ligand>
        <name>L-aspartate</name>
        <dbReference type="ChEBI" id="CHEBI:29991"/>
    </ligand>
</feature>
<feature type="binding site" evidence="1">
    <location>
        <position position="139"/>
    </location>
    <ligand>
        <name>carbamoyl phosphate</name>
        <dbReference type="ChEBI" id="CHEBI:58228"/>
    </ligand>
</feature>
<feature type="binding site" evidence="1">
    <location>
        <position position="169"/>
    </location>
    <ligand>
        <name>carbamoyl phosphate</name>
        <dbReference type="ChEBI" id="CHEBI:58228"/>
    </ligand>
</feature>
<feature type="binding site" evidence="1">
    <location>
        <position position="172"/>
    </location>
    <ligand>
        <name>carbamoyl phosphate</name>
        <dbReference type="ChEBI" id="CHEBI:58228"/>
    </ligand>
</feature>
<feature type="binding site" evidence="1">
    <location>
        <position position="202"/>
    </location>
    <ligand>
        <name>L-aspartate</name>
        <dbReference type="ChEBI" id="CHEBI:29991"/>
    </ligand>
</feature>
<feature type="binding site" evidence="1">
    <location>
        <position position="257"/>
    </location>
    <ligand>
        <name>L-aspartate</name>
        <dbReference type="ChEBI" id="CHEBI:29991"/>
    </ligand>
</feature>
<feature type="binding site" evidence="1">
    <location>
        <position position="298"/>
    </location>
    <ligand>
        <name>carbamoyl phosphate</name>
        <dbReference type="ChEBI" id="CHEBI:58228"/>
    </ligand>
</feature>
<feature type="binding site" evidence="1">
    <location>
        <position position="299"/>
    </location>
    <ligand>
        <name>carbamoyl phosphate</name>
        <dbReference type="ChEBI" id="CHEBI:58228"/>
    </ligand>
</feature>
<organism>
    <name type="scientific">Paraburkholderia xenovorans (strain LB400)</name>
    <dbReference type="NCBI Taxonomy" id="266265"/>
    <lineage>
        <taxon>Bacteria</taxon>
        <taxon>Pseudomonadati</taxon>
        <taxon>Pseudomonadota</taxon>
        <taxon>Betaproteobacteria</taxon>
        <taxon>Burkholderiales</taxon>
        <taxon>Burkholderiaceae</taxon>
        <taxon>Paraburkholderia</taxon>
    </lineage>
</organism>
<gene>
    <name evidence="1" type="primary">pyrB</name>
    <name type="ordered locus">Bxeno_A0652</name>
    <name type="ORF">Bxe_A3808</name>
</gene>
<keyword id="KW-0665">Pyrimidine biosynthesis</keyword>
<keyword id="KW-1185">Reference proteome</keyword>
<keyword id="KW-0808">Transferase</keyword>
<proteinExistence type="inferred from homology"/>
<evidence type="ECO:0000255" key="1">
    <source>
        <dbReference type="HAMAP-Rule" id="MF_00001"/>
    </source>
</evidence>
<name>PYRB_PARXL</name>
<sequence length="341" mass="37256">MNTATQAPKDSADSATERFRYGFLKGNPQLTKNGELKHLLSIEGLPKAIVNHILDTADQFVSVTDREVKKVPLLRGKSVFNLFFENSTRTRTTFEIAATRLSADVLNLNINASSTSKGESLLDTINNLSAMHADMFVVRHASSGAPYLIAQHCAPHVHVINAGDGRHAHPTQGLLDMYTIRHYKKDFTKLRVAIVGDILHSRVARSDIHALTTLGVPEVRAIGPRTLLPGGLEQMGVRVFHNLDEGLKDVDVIIMLRLQNERMSGALLPSAQEYFKSWGLTPERLALAAPEAIVMHPGPMNRGVEIDSQVADGPQSVILNQVTFGIAVRMAVMGIVAGNHD</sequence>
<protein>
    <recommendedName>
        <fullName evidence="1">Aspartate carbamoyltransferase catalytic subunit</fullName>
        <ecNumber evidence="1">2.1.3.2</ecNumber>
    </recommendedName>
    <alternativeName>
        <fullName evidence="1">Aspartate transcarbamylase</fullName>
        <shortName evidence="1">ATCase</shortName>
    </alternativeName>
</protein>
<accession>Q144P9</accession>
<reference key="1">
    <citation type="journal article" date="2006" name="Proc. Natl. Acad. Sci. U.S.A.">
        <title>Burkholderia xenovorans LB400 harbors a multi-replicon, 9.73-Mbp genome shaped for versatility.</title>
        <authorList>
            <person name="Chain P.S.G."/>
            <person name="Denef V.J."/>
            <person name="Konstantinidis K.T."/>
            <person name="Vergez L.M."/>
            <person name="Agullo L."/>
            <person name="Reyes V.L."/>
            <person name="Hauser L."/>
            <person name="Cordova M."/>
            <person name="Gomez L."/>
            <person name="Gonzalez M."/>
            <person name="Land M."/>
            <person name="Lao V."/>
            <person name="Larimer F."/>
            <person name="LiPuma J.J."/>
            <person name="Mahenthiralingam E."/>
            <person name="Malfatti S.A."/>
            <person name="Marx C.J."/>
            <person name="Parnell J.J."/>
            <person name="Ramette A."/>
            <person name="Richardson P."/>
            <person name="Seeger M."/>
            <person name="Smith D."/>
            <person name="Spilker T."/>
            <person name="Sul W.J."/>
            <person name="Tsoi T.V."/>
            <person name="Ulrich L.E."/>
            <person name="Zhulin I.B."/>
            <person name="Tiedje J.M."/>
        </authorList>
    </citation>
    <scope>NUCLEOTIDE SEQUENCE [LARGE SCALE GENOMIC DNA]</scope>
    <source>
        <strain>LB400</strain>
    </source>
</reference>